<reference key="1">
    <citation type="submission" date="2007-04" db="EMBL/GenBank/DDBJ databases">
        <title>Genome sequence of the thermophilic hydrogen-producing bacterium Caldicellulosiruptor saccharolyticus DSM 8903.</title>
        <authorList>
            <person name="Copeland A."/>
            <person name="Lucas S."/>
            <person name="Lapidus A."/>
            <person name="Barry K."/>
            <person name="Detter J.C."/>
            <person name="Glavina del Rio T."/>
            <person name="Hammon N."/>
            <person name="Israni S."/>
            <person name="Dalin E."/>
            <person name="Tice H."/>
            <person name="Pitluck S."/>
            <person name="Kiss H."/>
            <person name="Brettin T."/>
            <person name="Bruce D."/>
            <person name="Han C."/>
            <person name="Schmutz J."/>
            <person name="Larimer F."/>
            <person name="Land M."/>
            <person name="Hauser L."/>
            <person name="Kyrpides N."/>
            <person name="Lykidis A."/>
            <person name="van de Werken H.J.G."/>
            <person name="Verhaart M.R.A."/>
            <person name="VanFossen A.L."/>
            <person name="Lewis D.L."/>
            <person name="Nichols J.D."/>
            <person name="Goorissen H.P."/>
            <person name="van Niel E.W.J."/>
            <person name="Stams F.J.M."/>
            <person name="Willquist K.U."/>
            <person name="Ward D.E."/>
            <person name="van der Oost J."/>
            <person name="Kelly R.M."/>
            <person name="Kengen S.M.W."/>
            <person name="Richardson P."/>
        </authorList>
    </citation>
    <scope>NUCLEOTIDE SEQUENCE [LARGE SCALE GENOMIC DNA]</scope>
    <source>
        <strain>ATCC 43494 / DSM 8903 / Tp8T 6331</strain>
    </source>
</reference>
<proteinExistence type="inferred from homology"/>
<dbReference type="EC" id="5.6.1.7" evidence="1"/>
<dbReference type="EMBL" id="CP000679">
    <property type="protein sequence ID" value="ABP66894.1"/>
    <property type="molecule type" value="Genomic_DNA"/>
</dbReference>
<dbReference type="RefSeq" id="WP_011916830.1">
    <property type="nucleotide sequence ID" value="NC_009437.1"/>
</dbReference>
<dbReference type="SMR" id="A4XJ09"/>
<dbReference type="STRING" id="351627.Csac_1292"/>
<dbReference type="KEGG" id="csc:Csac_1292"/>
<dbReference type="eggNOG" id="COG0459">
    <property type="taxonomic scope" value="Bacteria"/>
</dbReference>
<dbReference type="HOGENOM" id="CLU_016503_1_1_9"/>
<dbReference type="OrthoDB" id="9766614at2"/>
<dbReference type="Proteomes" id="UP000000256">
    <property type="component" value="Chromosome"/>
</dbReference>
<dbReference type="GO" id="GO:0005737">
    <property type="term" value="C:cytoplasm"/>
    <property type="evidence" value="ECO:0007669"/>
    <property type="project" value="UniProtKB-SubCell"/>
</dbReference>
<dbReference type="GO" id="GO:0005524">
    <property type="term" value="F:ATP binding"/>
    <property type="evidence" value="ECO:0007669"/>
    <property type="project" value="UniProtKB-UniRule"/>
</dbReference>
<dbReference type="GO" id="GO:0140662">
    <property type="term" value="F:ATP-dependent protein folding chaperone"/>
    <property type="evidence" value="ECO:0007669"/>
    <property type="project" value="InterPro"/>
</dbReference>
<dbReference type="GO" id="GO:0016853">
    <property type="term" value="F:isomerase activity"/>
    <property type="evidence" value="ECO:0007669"/>
    <property type="project" value="UniProtKB-KW"/>
</dbReference>
<dbReference type="GO" id="GO:0051082">
    <property type="term" value="F:unfolded protein binding"/>
    <property type="evidence" value="ECO:0007669"/>
    <property type="project" value="UniProtKB-UniRule"/>
</dbReference>
<dbReference type="GO" id="GO:0042026">
    <property type="term" value="P:protein refolding"/>
    <property type="evidence" value="ECO:0007669"/>
    <property type="project" value="UniProtKB-UniRule"/>
</dbReference>
<dbReference type="CDD" id="cd03344">
    <property type="entry name" value="GroEL"/>
    <property type="match status" value="1"/>
</dbReference>
<dbReference type="FunFam" id="1.10.560.10:FF:000001">
    <property type="entry name" value="60 kDa chaperonin"/>
    <property type="match status" value="1"/>
</dbReference>
<dbReference type="FunFam" id="3.50.7.10:FF:000001">
    <property type="entry name" value="60 kDa chaperonin"/>
    <property type="match status" value="1"/>
</dbReference>
<dbReference type="Gene3D" id="3.50.7.10">
    <property type="entry name" value="GroEL"/>
    <property type="match status" value="1"/>
</dbReference>
<dbReference type="Gene3D" id="1.10.560.10">
    <property type="entry name" value="GroEL-like equatorial domain"/>
    <property type="match status" value="1"/>
</dbReference>
<dbReference type="Gene3D" id="3.30.260.10">
    <property type="entry name" value="TCP-1-like chaperonin intermediate domain"/>
    <property type="match status" value="1"/>
</dbReference>
<dbReference type="HAMAP" id="MF_00600">
    <property type="entry name" value="CH60"/>
    <property type="match status" value="1"/>
</dbReference>
<dbReference type="InterPro" id="IPR018370">
    <property type="entry name" value="Chaperonin_Cpn60_CS"/>
</dbReference>
<dbReference type="InterPro" id="IPR001844">
    <property type="entry name" value="Cpn60/GroEL"/>
</dbReference>
<dbReference type="InterPro" id="IPR002423">
    <property type="entry name" value="Cpn60/GroEL/TCP-1"/>
</dbReference>
<dbReference type="InterPro" id="IPR027409">
    <property type="entry name" value="GroEL-like_apical_dom_sf"/>
</dbReference>
<dbReference type="InterPro" id="IPR027413">
    <property type="entry name" value="GROEL-like_equatorial_sf"/>
</dbReference>
<dbReference type="InterPro" id="IPR027410">
    <property type="entry name" value="TCP-1-like_intermed_sf"/>
</dbReference>
<dbReference type="NCBIfam" id="TIGR02348">
    <property type="entry name" value="GroEL"/>
    <property type="match status" value="1"/>
</dbReference>
<dbReference type="NCBIfam" id="NF000592">
    <property type="entry name" value="PRK00013.1"/>
    <property type="match status" value="1"/>
</dbReference>
<dbReference type="NCBIfam" id="NF009487">
    <property type="entry name" value="PRK12849.1"/>
    <property type="match status" value="1"/>
</dbReference>
<dbReference type="NCBIfam" id="NF009488">
    <property type="entry name" value="PRK12850.1"/>
    <property type="match status" value="1"/>
</dbReference>
<dbReference type="NCBIfam" id="NF009489">
    <property type="entry name" value="PRK12851.1"/>
    <property type="match status" value="1"/>
</dbReference>
<dbReference type="PANTHER" id="PTHR45633">
    <property type="entry name" value="60 KDA HEAT SHOCK PROTEIN, MITOCHONDRIAL"/>
    <property type="match status" value="1"/>
</dbReference>
<dbReference type="Pfam" id="PF00118">
    <property type="entry name" value="Cpn60_TCP1"/>
    <property type="match status" value="1"/>
</dbReference>
<dbReference type="PRINTS" id="PR00298">
    <property type="entry name" value="CHAPERONIN60"/>
</dbReference>
<dbReference type="SUPFAM" id="SSF52029">
    <property type="entry name" value="GroEL apical domain-like"/>
    <property type="match status" value="1"/>
</dbReference>
<dbReference type="SUPFAM" id="SSF48592">
    <property type="entry name" value="GroEL equatorial domain-like"/>
    <property type="match status" value="1"/>
</dbReference>
<dbReference type="SUPFAM" id="SSF54849">
    <property type="entry name" value="GroEL-intermediate domain like"/>
    <property type="match status" value="1"/>
</dbReference>
<dbReference type="PROSITE" id="PS00296">
    <property type="entry name" value="CHAPERONINS_CPN60"/>
    <property type="match status" value="1"/>
</dbReference>
<comment type="function">
    <text evidence="1">Together with its co-chaperonin GroES, plays an essential role in assisting protein folding. The GroEL-GroES system forms a nano-cage that allows encapsulation of the non-native substrate proteins and provides a physical environment optimized to promote and accelerate protein folding.</text>
</comment>
<comment type="catalytic activity">
    <reaction evidence="1">
        <text>ATP + H2O + a folded polypeptide = ADP + phosphate + an unfolded polypeptide.</text>
        <dbReference type="EC" id="5.6.1.7"/>
    </reaction>
</comment>
<comment type="subunit">
    <text evidence="1">Forms a cylinder of 14 subunits composed of two heptameric rings stacked back-to-back. Interacts with the co-chaperonin GroES.</text>
</comment>
<comment type="subcellular location">
    <subcellularLocation>
        <location evidence="1">Cytoplasm</location>
    </subcellularLocation>
</comment>
<comment type="similarity">
    <text evidence="1">Belongs to the chaperonin (HSP60) family.</text>
</comment>
<keyword id="KW-0067">ATP-binding</keyword>
<keyword id="KW-0143">Chaperone</keyword>
<keyword id="KW-0963">Cytoplasm</keyword>
<keyword id="KW-0413">Isomerase</keyword>
<keyword id="KW-0547">Nucleotide-binding</keyword>
<feature type="chain" id="PRO_1000025761" description="Chaperonin GroEL">
    <location>
        <begin position="1"/>
        <end position="539"/>
    </location>
</feature>
<feature type="binding site" evidence="1">
    <location>
        <begin position="30"/>
        <end position="33"/>
    </location>
    <ligand>
        <name>ATP</name>
        <dbReference type="ChEBI" id="CHEBI:30616"/>
    </ligand>
</feature>
<feature type="binding site" evidence="1">
    <location>
        <begin position="87"/>
        <end position="91"/>
    </location>
    <ligand>
        <name>ATP</name>
        <dbReference type="ChEBI" id="CHEBI:30616"/>
    </ligand>
</feature>
<feature type="binding site" evidence="1">
    <location>
        <position position="414"/>
    </location>
    <ligand>
        <name>ATP</name>
        <dbReference type="ChEBI" id="CHEBI:30616"/>
    </ligand>
</feature>
<feature type="binding site" evidence="1">
    <location>
        <begin position="479"/>
        <end position="481"/>
    </location>
    <ligand>
        <name>ATP</name>
        <dbReference type="ChEBI" id="CHEBI:30616"/>
    </ligand>
</feature>
<feature type="binding site" evidence="1">
    <location>
        <position position="495"/>
    </location>
    <ligand>
        <name>ATP</name>
        <dbReference type="ChEBI" id="CHEBI:30616"/>
    </ligand>
</feature>
<organism>
    <name type="scientific">Caldicellulosiruptor saccharolyticus (strain ATCC 43494 / DSM 8903 / Tp8T 6331)</name>
    <dbReference type="NCBI Taxonomy" id="351627"/>
    <lineage>
        <taxon>Bacteria</taxon>
        <taxon>Bacillati</taxon>
        <taxon>Bacillota</taxon>
        <taxon>Bacillota incertae sedis</taxon>
        <taxon>Caldicellulosiruptorales</taxon>
        <taxon>Caldicellulosiruptoraceae</taxon>
        <taxon>Caldicellulosiruptor</taxon>
    </lineage>
</organism>
<sequence>MAAKMILFDEEARRALERGVNKLADTVKVTLGPKGRNVVLEKKFGSPQIVNDGVTIAKEIELEDPFENMGAQIVREVASKTNDIAGDGTTTATVLAQAMIREGLKNIAAGANPMILRRGIQKAVDVVVDEIKKMSKKVRGKEDITYVASISAGDEEIGKLVADAMEKVTNDGVITVEESKTTETTLEIVEGMQFDRGYISAYMVTDTERMEAVLDDPYILITDKKISTIQDILPLLEQIVQQGKKLLIIAEDVEGEALATLVVNKLRGTLQCVAVKAPGFGDRRKAMLQDIAILTGGQVISEELGLDLREVKISQLGRARQVKVQKENTIIVDGAGDPSEIKARIQSIKKQIEETTSDFDREKLQERLAKLAGGVAVIHVGAATETEMKEKKLRIEDALAATKAAVEEGIVPGGGTAFINAIPALDKLIETLTGDEKTGAMIVKKALEEPLRQIAENAGLDGSVIVNKVKESPAGIGFDALNERFVDMFEAGIVDPTKVTRTAIQNAASAAAMLLTTEAVVAEKPEKEKNPPAPAPDMY</sequence>
<evidence type="ECO:0000255" key="1">
    <source>
        <dbReference type="HAMAP-Rule" id="MF_00600"/>
    </source>
</evidence>
<accession>A4XJ09</accession>
<protein>
    <recommendedName>
        <fullName evidence="1">Chaperonin GroEL</fullName>
        <ecNumber evidence="1">5.6.1.7</ecNumber>
    </recommendedName>
    <alternativeName>
        <fullName evidence="1">60 kDa chaperonin</fullName>
    </alternativeName>
    <alternativeName>
        <fullName evidence="1">Chaperonin-60</fullName>
        <shortName evidence="1">Cpn60</shortName>
    </alternativeName>
</protein>
<name>CH60_CALS8</name>
<gene>
    <name evidence="1" type="primary">groEL</name>
    <name evidence="1" type="synonym">groL</name>
    <name type="ordered locus">Csac_1292</name>
</gene>